<name>PA2B5_BUNMU</name>
<evidence type="ECO:0000250" key="1"/>
<evidence type="ECO:0000250" key="2">
    <source>
        <dbReference type="UniProtKB" id="P00617"/>
    </source>
</evidence>
<evidence type="ECO:0000250" key="3">
    <source>
        <dbReference type="UniProtKB" id="P14418"/>
    </source>
</evidence>
<evidence type="ECO:0000255" key="4">
    <source>
        <dbReference type="PROSITE-ProRule" id="PRU10035"/>
    </source>
</evidence>
<evidence type="ECO:0000255" key="5">
    <source>
        <dbReference type="PROSITE-ProRule" id="PRU10036"/>
    </source>
</evidence>
<evidence type="ECO:0000269" key="6">
    <source>
    </source>
</evidence>
<evidence type="ECO:0000305" key="7"/>
<evidence type="ECO:0000305" key="8">
    <source>
    </source>
</evidence>
<keyword id="KW-0106">Calcium</keyword>
<keyword id="KW-1015">Disulfide bond</keyword>
<keyword id="KW-0378">Hydrolase</keyword>
<keyword id="KW-0442">Lipid degradation</keyword>
<keyword id="KW-0443">Lipid metabolism</keyword>
<keyword id="KW-0479">Metal-binding</keyword>
<keyword id="KW-0528">Neurotoxin</keyword>
<keyword id="KW-0638">Presynaptic neurotoxin</keyword>
<keyword id="KW-0964">Secreted</keyword>
<keyword id="KW-0732">Signal</keyword>
<keyword id="KW-0800">Toxin</keyword>
<feature type="signal peptide" evidence="2">
    <location>
        <begin position="1" status="less than"/>
        <end position="9"/>
    </location>
</feature>
<feature type="propeptide" id="PRO_0000462263" evidence="2">
    <location>
        <begin position="10"/>
        <end position="17"/>
    </location>
</feature>
<feature type="chain" id="PRO_0000022843" description="Basic phospholipase A2 beta-bungarotoxin A5 chain" evidence="2">
    <location>
        <begin position="18"/>
        <end position="137"/>
    </location>
</feature>
<feature type="active site" evidence="3">
    <location>
        <position position="65"/>
    </location>
</feature>
<feature type="active site" evidence="3">
    <location>
        <position position="111"/>
    </location>
</feature>
<feature type="binding site" evidence="2">
    <location>
        <position position="45"/>
    </location>
    <ligand>
        <name>Ca(2+)</name>
        <dbReference type="ChEBI" id="CHEBI:29108"/>
    </ligand>
</feature>
<feature type="binding site" evidence="2">
    <location>
        <position position="47"/>
    </location>
    <ligand>
        <name>Ca(2+)</name>
        <dbReference type="ChEBI" id="CHEBI:29108"/>
    </ligand>
</feature>
<feature type="binding site" evidence="2">
    <location>
        <position position="49"/>
    </location>
    <ligand>
        <name>Ca(2+)</name>
        <dbReference type="ChEBI" id="CHEBI:29108"/>
    </ligand>
</feature>
<feature type="binding site" evidence="2">
    <location>
        <position position="66"/>
    </location>
    <ligand>
        <name>Ca(2+)</name>
        <dbReference type="ChEBI" id="CHEBI:29108"/>
    </ligand>
</feature>
<feature type="disulfide bond" description="Interchain (with a B chain)" evidence="2">
    <location>
        <position position="32"/>
    </location>
</feature>
<feature type="disulfide bond" evidence="2">
    <location>
        <begin position="44"/>
        <end position="136"/>
    </location>
</feature>
<feature type="disulfide bond" evidence="2">
    <location>
        <begin position="46"/>
        <end position="62"/>
    </location>
</feature>
<feature type="disulfide bond" evidence="2">
    <location>
        <begin position="61"/>
        <end position="117"/>
    </location>
</feature>
<feature type="disulfide bond" evidence="2">
    <location>
        <begin position="68"/>
        <end position="110"/>
    </location>
</feature>
<feature type="disulfide bond" evidence="2">
    <location>
        <begin position="78"/>
        <end position="103"/>
    </location>
</feature>
<feature type="disulfide bond" evidence="2">
    <location>
        <begin position="96"/>
        <end position="108"/>
    </location>
</feature>
<feature type="mutagenesis site" description="Alterations of folding pathway and structure." evidence="6">
    <original>Y</original>
    <variation>C</variation>
    <location>
        <position position="28"/>
    </location>
</feature>
<feature type="mutagenesis site" description="Alterations of folding pathway and structure." evidence="6">
    <original>C</original>
    <variation>S</variation>
    <location>
        <position position="32"/>
    </location>
</feature>
<feature type="mutagenesis site" description="Alterations of folding pathway and structure." evidence="6">
    <original>L</original>
    <variation>C</variation>
    <location>
        <position position="89"/>
    </location>
</feature>
<feature type="non-terminal residue" evidence="8">
    <location>
        <position position="1"/>
    </location>
</feature>
<organism>
    <name type="scientific">Bungarus multicinctus</name>
    <name type="common">Many-banded krait</name>
    <dbReference type="NCBI Taxonomy" id="8616"/>
    <lineage>
        <taxon>Eukaryota</taxon>
        <taxon>Metazoa</taxon>
        <taxon>Chordata</taxon>
        <taxon>Craniata</taxon>
        <taxon>Vertebrata</taxon>
        <taxon>Euteleostomi</taxon>
        <taxon>Lepidosauria</taxon>
        <taxon>Squamata</taxon>
        <taxon>Bifurcata</taxon>
        <taxon>Unidentata</taxon>
        <taxon>Episquamata</taxon>
        <taxon>Toxicofera</taxon>
        <taxon>Serpentes</taxon>
        <taxon>Colubroidea</taxon>
        <taxon>Elapidae</taxon>
        <taxon>Bungarinae</taxon>
        <taxon>Bungarus</taxon>
    </lineage>
</organism>
<sequence length="137" mass="15265">AVCVSLLGAANIPPQHLNLYQFKEMIRYTIPCEKTWGEYADYGCYCGAGGSGRPIDALDRCCYVHDNCYGDAEKKHKCNPKTQSYSYKLTKRTIICYGAAGTCGRIVCDCDRTTALCFGNSEYIEGHKNIDTARFCQ</sequence>
<proteinExistence type="evidence at protein level"/>
<protein>
    <recommendedName>
        <fullName>Basic phospholipase A2 beta-bungarotoxin A5 chain</fullName>
        <shortName>Beta-BuTX A5 chain</shortName>
        <shortName>svPLA2</shortName>
        <ecNumber>3.1.1.4</ecNumber>
    </recommendedName>
    <alternativeName>
        <fullName>Phosphatidylcholine 2-acylhydrolase</fullName>
    </alternativeName>
</protein>
<reference key="1">
    <citation type="journal article" date="1996" name="Biochem. Biophys. Res. Commun.">
        <title>cDNA sequence analysis and expression of the a chain of beta-bungarotoxin from Bungarus multicinctus (Taiwan banded krait).</title>
        <authorList>
            <person name="Chang L.-S."/>
            <person name="Wu P.-F."/>
            <person name="Chang C.-C."/>
        </authorList>
    </citation>
    <scope>NUCLEOTIDE SEQUENCE [MRNA]</scope>
    <source>
        <tissue>Venom gland</tissue>
    </source>
</reference>
<reference key="2">
    <citation type="journal article" date="1996" name="J. Protein Chem.">
        <title>cDNA sequence analysis and mutagenesis studies on the A chain of beta-bungarotoxin from Taiwan banded krait.</title>
        <authorList>
            <person name="Chang L.-S."/>
            <person name="Wu P.-F."/>
            <person name="Chang C.-C."/>
        </authorList>
    </citation>
    <scope>MUTAGENESIS OF TYR-28; CYS-32 AND LEU-89</scope>
</reference>
<reference key="3">
    <citation type="journal article" date="2001" name="Toxicon">
        <title>What does beta-bungarotoxin do at the neuromuscular junction?</title>
        <authorList>
            <person name="Rowan E.G."/>
        </authorList>
    </citation>
    <scope>REVIEW</scope>
</reference>
<accession>P59018</accession>
<dbReference type="EC" id="3.1.1.4"/>
<dbReference type="EMBL" id="Z54225">
    <property type="status" value="NOT_ANNOTATED_CDS"/>
    <property type="molecule type" value="mRNA"/>
</dbReference>
<dbReference type="PIR" id="JC4710">
    <property type="entry name" value="JC4710"/>
</dbReference>
<dbReference type="SMR" id="P59018"/>
<dbReference type="GO" id="GO:0005576">
    <property type="term" value="C:extracellular region"/>
    <property type="evidence" value="ECO:0007669"/>
    <property type="project" value="UniProtKB-SubCell"/>
</dbReference>
<dbReference type="GO" id="GO:0005509">
    <property type="term" value="F:calcium ion binding"/>
    <property type="evidence" value="ECO:0007669"/>
    <property type="project" value="InterPro"/>
</dbReference>
<dbReference type="GO" id="GO:0047498">
    <property type="term" value="F:calcium-dependent phospholipase A2 activity"/>
    <property type="evidence" value="ECO:0007669"/>
    <property type="project" value="TreeGrafter"/>
</dbReference>
<dbReference type="GO" id="GO:0005543">
    <property type="term" value="F:phospholipid binding"/>
    <property type="evidence" value="ECO:0007669"/>
    <property type="project" value="TreeGrafter"/>
</dbReference>
<dbReference type="GO" id="GO:0090729">
    <property type="term" value="F:toxin activity"/>
    <property type="evidence" value="ECO:0007669"/>
    <property type="project" value="UniProtKB-KW"/>
</dbReference>
<dbReference type="GO" id="GO:0050482">
    <property type="term" value="P:arachidonate secretion"/>
    <property type="evidence" value="ECO:0007669"/>
    <property type="project" value="InterPro"/>
</dbReference>
<dbReference type="GO" id="GO:0016042">
    <property type="term" value="P:lipid catabolic process"/>
    <property type="evidence" value="ECO:0007669"/>
    <property type="project" value="UniProtKB-KW"/>
</dbReference>
<dbReference type="GO" id="GO:0006644">
    <property type="term" value="P:phospholipid metabolic process"/>
    <property type="evidence" value="ECO:0007669"/>
    <property type="project" value="InterPro"/>
</dbReference>
<dbReference type="CDD" id="cd00125">
    <property type="entry name" value="PLA2c"/>
    <property type="match status" value="1"/>
</dbReference>
<dbReference type="FunFam" id="1.20.90.10:FF:000007">
    <property type="entry name" value="Acidic phospholipase A2"/>
    <property type="match status" value="1"/>
</dbReference>
<dbReference type="Gene3D" id="1.20.90.10">
    <property type="entry name" value="Phospholipase A2 domain"/>
    <property type="match status" value="1"/>
</dbReference>
<dbReference type="InterPro" id="IPR001211">
    <property type="entry name" value="PLipase_A2"/>
</dbReference>
<dbReference type="InterPro" id="IPR033112">
    <property type="entry name" value="PLipase_A2_Asp_AS"/>
</dbReference>
<dbReference type="InterPro" id="IPR016090">
    <property type="entry name" value="PLipase_A2_dom"/>
</dbReference>
<dbReference type="InterPro" id="IPR036444">
    <property type="entry name" value="PLipase_A2_dom_sf"/>
</dbReference>
<dbReference type="InterPro" id="IPR033113">
    <property type="entry name" value="PLipase_A2_His_AS"/>
</dbReference>
<dbReference type="PANTHER" id="PTHR11716:SF100">
    <property type="entry name" value="PHOSPHOLIPASE A2"/>
    <property type="match status" value="1"/>
</dbReference>
<dbReference type="PANTHER" id="PTHR11716">
    <property type="entry name" value="PHOSPHOLIPASE A2 FAMILY MEMBER"/>
    <property type="match status" value="1"/>
</dbReference>
<dbReference type="Pfam" id="PF00068">
    <property type="entry name" value="Phospholip_A2_1"/>
    <property type="match status" value="1"/>
</dbReference>
<dbReference type="PRINTS" id="PR00389">
    <property type="entry name" value="PHPHLIPASEA2"/>
</dbReference>
<dbReference type="SMART" id="SM00085">
    <property type="entry name" value="PA2c"/>
    <property type="match status" value="1"/>
</dbReference>
<dbReference type="SUPFAM" id="SSF48619">
    <property type="entry name" value="Phospholipase A2, PLA2"/>
    <property type="match status" value="1"/>
</dbReference>
<dbReference type="PROSITE" id="PS00119">
    <property type="entry name" value="PA2_ASP"/>
    <property type="match status" value="1"/>
</dbReference>
<dbReference type="PROSITE" id="PS00118">
    <property type="entry name" value="PA2_HIS"/>
    <property type="match status" value="1"/>
</dbReference>
<comment type="function">
    <text evidence="1">Snake venom phospholipase A2 (PLA2) that inhibits neuromuscular transmission by blocking acetylcholine release from the nerve termini. PLA2 catalyzes the calcium-dependent hydrolysis of the 2-acyl groups in 3-sn-phosphoglycerides (By similarity).</text>
</comment>
<comment type="catalytic activity">
    <reaction evidence="4 5">
        <text>a 1,2-diacyl-sn-glycero-3-phosphocholine + H2O = a 1-acyl-sn-glycero-3-phosphocholine + a fatty acid + H(+)</text>
        <dbReference type="Rhea" id="RHEA:15801"/>
        <dbReference type="ChEBI" id="CHEBI:15377"/>
        <dbReference type="ChEBI" id="CHEBI:15378"/>
        <dbReference type="ChEBI" id="CHEBI:28868"/>
        <dbReference type="ChEBI" id="CHEBI:57643"/>
        <dbReference type="ChEBI" id="CHEBI:58168"/>
        <dbReference type="EC" id="3.1.1.4"/>
    </reaction>
</comment>
<comment type="cofactor">
    <cofactor evidence="2">
        <name>Ca(2+)</name>
        <dbReference type="ChEBI" id="CHEBI:29108"/>
    </cofactor>
    <text evidence="2">Binds 1 Ca(2+) ion.</text>
</comment>
<comment type="subunit">
    <text evidence="2">Heterodimer; disulfide-linked. The A chains have phospholipase A2 activity and the B chains show homology with the basic protease inhibitors.</text>
</comment>
<comment type="subcellular location">
    <subcellularLocation>
        <location evidence="8">Secreted</location>
    </subcellularLocation>
</comment>
<comment type="tissue specificity">
    <text evidence="8">Expressed by the venom gland.</text>
</comment>
<comment type="similarity">
    <text evidence="7">Belongs to the phospholipase A2 family. Group I subfamily. D49 sub-subfamily.</text>
</comment>